<gene>
    <name evidence="1" type="primary">dnaJ</name>
    <name type="ordered locus">MCAP_0370</name>
</gene>
<dbReference type="EMBL" id="CP000123">
    <property type="protein sequence ID" value="ABC01340.1"/>
    <property type="molecule type" value="Genomic_DNA"/>
</dbReference>
<dbReference type="EMBL" id="U51235">
    <property type="protein sequence ID" value="AAB09431.1"/>
    <property type="molecule type" value="Genomic_DNA"/>
</dbReference>
<dbReference type="RefSeq" id="WP_011387255.1">
    <property type="nucleotide sequence ID" value="NC_007633.1"/>
</dbReference>
<dbReference type="SMR" id="P71500"/>
<dbReference type="GeneID" id="23778674"/>
<dbReference type="KEGG" id="mcp:MCAP_0370"/>
<dbReference type="HOGENOM" id="CLU_017633_0_7_14"/>
<dbReference type="PhylomeDB" id="P71500"/>
<dbReference type="Proteomes" id="UP000001928">
    <property type="component" value="Chromosome"/>
</dbReference>
<dbReference type="GO" id="GO:0005737">
    <property type="term" value="C:cytoplasm"/>
    <property type="evidence" value="ECO:0007669"/>
    <property type="project" value="UniProtKB-SubCell"/>
</dbReference>
<dbReference type="GO" id="GO:0005524">
    <property type="term" value="F:ATP binding"/>
    <property type="evidence" value="ECO:0007669"/>
    <property type="project" value="InterPro"/>
</dbReference>
<dbReference type="GO" id="GO:0031072">
    <property type="term" value="F:heat shock protein binding"/>
    <property type="evidence" value="ECO:0007669"/>
    <property type="project" value="InterPro"/>
</dbReference>
<dbReference type="GO" id="GO:0051082">
    <property type="term" value="F:unfolded protein binding"/>
    <property type="evidence" value="ECO:0007669"/>
    <property type="project" value="UniProtKB-UniRule"/>
</dbReference>
<dbReference type="GO" id="GO:0008270">
    <property type="term" value="F:zinc ion binding"/>
    <property type="evidence" value="ECO:0007669"/>
    <property type="project" value="UniProtKB-UniRule"/>
</dbReference>
<dbReference type="GO" id="GO:0051085">
    <property type="term" value="P:chaperone cofactor-dependent protein refolding"/>
    <property type="evidence" value="ECO:0007669"/>
    <property type="project" value="TreeGrafter"/>
</dbReference>
<dbReference type="GO" id="GO:0006260">
    <property type="term" value="P:DNA replication"/>
    <property type="evidence" value="ECO:0007669"/>
    <property type="project" value="UniProtKB-KW"/>
</dbReference>
<dbReference type="GO" id="GO:0042026">
    <property type="term" value="P:protein refolding"/>
    <property type="evidence" value="ECO:0007669"/>
    <property type="project" value="TreeGrafter"/>
</dbReference>
<dbReference type="GO" id="GO:0009408">
    <property type="term" value="P:response to heat"/>
    <property type="evidence" value="ECO:0007669"/>
    <property type="project" value="InterPro"/>
</dbReference>
<dbReference type="CDD" id="cd06257">
    <property type="entry name" value="DnaJ"/>
    <property type="match status" value="1"/>
</dbReference>
<dbReference type="CDD" id="cd10747">
    <property type="entry name" value="DnaJ_C"/>
    <property type="match status" value="1"/>
</dbReference>
<dbReference type="CDD" id="cd10719">
    <property type="entry name" value="DnaJ_zf"/>
    <property type="match status" value="1"/>
</dbReference>
<dbReference type="FunFam" id="2.60.260.20:FF:000013">
    <property type="entry name" value="DnaJ subfamily B member 11"/>
    <property type="match status" value="1"/>
</dbReference>
<dbReference type="FunFam" id="2.10.230.10:FF:000002">
    <property type="entry name" value="Molecular chaperone DnaJ"/>
    <property type="match status" value="1"/>
</dbReference>
<dbReference type="Gene3D" id="1.10.287.110">
    <property type="entry name" value="DnaJ domain"/>
    <property type="match status" value="1"/>
</dbReference>
<dbReference type="Gene3D" id="2.10.230.10">
    <property type="entry name" value="Heat shock protein DnaJ, cysteine-rich domain"/>
    <property type="match status" value="1"/>
</dbReference>
<dbReference type="Gene3D" id="2.60.260.20">
    <property type="entry name" value="Urease metallochaperone UreE, N-terminal domain"/>
    <property type="match status" value="2"/>
</dbReference>
<dbReference type="HAMAP" id="MF_01152">
    <property type="entry name" value="DnaJ"/>
    <property type="match status" value="1"/>
</dbReference>
<dbReference type="InterPro" id="IPR012724">
    <property type="entry name" value="DnaJ"/>
</dbReference>
<dbReference type="InterPro" id="IPR002939">
    <property type="entry name" value="DnaJ_C"/>
</dbReference>
<dbReference type="InterPro" id="IPR001623">
    <property type="entry name" value="DnaJ_domain"/>
</dbReference>
<dbReference type="InterPro" id="IPR008971">
    <property type="entry name" value="HSP40/DnaJ_pept-bd"/>
</dbReference>
<dbReference type="InterPro" id="IPR001305">
    <property type="entry name" value="HSP_DnaJ_Cys-rich_dom"/>
</dbReference>
<dbReference type="InterPro" id="IPR036410">
    <property type="entry name" value="HSP_DnaJ_Cys-rich_dom_sf"/>
</dbReference>
<dbReference type="InterPro" id="IPR036869">
    <property type="entry name" value="J_dom_sf"/>
</dbReference>
<dbReference type="NCBIfam" id="TIGR02349">
    <property type="entry name" value="DnaJ_bact"/>
    <property type="match status" value="1"/>
</dbReference>
<dbReference type="NCBIfam" id="NF010889">
    <property type="entry name" value="PRK14296.1"/>
    <property type="match status" value="1"/>
</dbReference>
<dbReference type="PANTHER" id="PTHR43096:SF48">
    <property type="entry name" value="CHAPERONE PROTEIN DNAJ"/>
    <property type="match status" value="1"/>
</dbReference>
<dbReference type="PANTHER" id="PTHR43096">
    <property type="entry name" value="DNAJ HOMOLOG 1, MITOCHONDRIAL-RELATED"/>
    <property type="match status" value="1"/>
</dbReference>
<dbReference type="Pfam" id="PF00226">
    <property type="entry name" value="DnaJ"/>
    <property type="match status" value="1"/>
</dbReference>
<dbReference type="Pfam" id="PF01556">
    <property type="entry name" value="DnaJ_C"/>
    <property type="match status" value="1"/>
</dbReference>
<dbReference type="Pfam" id="PF00684">
    <property type="entry name" value="DnaJ_CXXCXGXG"/>
    <property type="match status" value="1"/>
</dbReference>
<dbReference type="PRINTS" id="PR00625">
    <property type="entry name" value="JDOMAIN"/>
</dbReference>
<dbReference type="SMART" id="SM00271">
    <property type="entry name" value="DnaJ"/>
    <property type="match status" value="1"/>
</dbReference>
<dbReference type="SUPFAM" id="SSF46565">
    <property type="entry name" value="Chaperone J-domain"/>
    <property type="match status" value="1"/>
</dbReference>
<dbReference type="SUPFAM" id="SSF57938">
    <property type="entry name" value="DnaJ/Hsp40 cysteine-rich domain"/>
    <property type="match status" value="1"/>
</dbReference>
<dbReference type="SUPFAM" id="SSF49493">
    <property type="entry name" value="HSP40/DnaJ peptide-binding domain"/>
    <property type="match status" value="2"/>
</dbReference>
<dbReference type="PROSITE" id="PS50076">
    <property type="entry name" value="DNAJ_2"/>
    <property type="match status" value="1"/>
</dbReference>
<dbReference type="PROSITE" id="PS51188">
    <property type="entry name" value="ZF_CR"/>
    <property type="match status" value="1"/>
</dbReference>
<comment type="function">
    <text evidence="1">Participates actively in the response to hyperosmotic and heat shock by preventing the aggregation of stress-denatured proteins and by disaggregating proteins, also in an autonomous, DnaK-independent fashion. Unfolded proteins bind initially to DnaJ; upon interaction with the DnaJ-bound protein, DnaK hydrolyzes its bound ATP, resulting in the formation of a stable complex. GrpE releases ADP from DnaK; ATP binding to DnaK triggers the release of the substrate protein, thus completing the reaction cycle. Several rounds of ATP-dependent interactions between DnaJ, DnaK and GrpE are required for fully efficient folding. Also involved, together with DnaK and GrpE, in the DNA replication of plasmids through activation of initiation proteins.</text>
</comment>
<comment type="cofactor">
    <cofactor evidence="1">
        <name>Zn(2+)</name>
        <dbReference type="ChEBI" id="CHEBI:29105"/>
    </cofactor>
    <text evidence="1">Binds 2 Zn(2+) ions per monomer.</text>
</comment>
<comment type="subunit">
    <text evidence="1">Homodimer.</text>
</comment>
<comment type="subcellular location">
    <subcellularLocation>
        <location evidence="1">Cytoplasm</location>
    </subcellularLocation>
</comment>
<comment type="domain">
    <text evidence="1">The J domain is necessary and sufficient to stimulate DnaK ATPase activity. Zinc center 1 plays an important role in the autonomous, DnaK-independent chaperone activity of DnaJ. Zinc center 2 is essential for interaction with DnaK and for DnaJ activity.</text>
</comment>
<comment type="similarity">
    <text evidence="1">Belongs to the DnaJ family.</text>
</comment>
<feature type="chain" id="PRO_0000070822" description="Chaperone protein DnaJ">
    <location>
        <begin position="1"/>
        <end position="372"/>
    </location>
</feature>
<feature type="domain" description="J" evidence="1">
    <location>
        <begin position="5"/>
        <end position="69"/>
    </location>
</feature>
<feature type="repeat" description="CXXCXGXG motif">
    <location>
        <begin position="152"/>
        <end position="159"/>
    </location>
</feature>
<feature type="repeat" description="CXXCXGXG motif">
    <location>
        <begin position="169"/>
        <end position="176"/>
    </location>
</feature>
<feature type="repeat" description="CXXCXGXG motif">
    <location>
        <begin position="195"/>
        <end position="202"/>
    </location>
</feature>
<feature type="repeat" description="CXXCXGXG motif">
    <location>
        <begin position="209"/>
        <end position="216"/>
    </location>
</feature>
<feature type="zinc finger region" description="CR-type" evidence="1">
    <location>
        <begin position="139"/>
        <end position="221"/>
    </location>
</feature>
<feature type="binding site" evidence="1">
    <location>
        <position position="152"/>
    </location>
    <ligand>
        <name>Zn(2+)</name>
        <dbReference type="ChEBI" id="CHEBI:29105"/>
        <label>1</label>
    </ligand>
</feature>
<feature type="binding site" evidence="1">
    <location>
        <position position="155"/>
    </location>
    <ligand>
        <name>Zn(2+)</name>
        <dbReference type="ChEBI" id="CHEBI:29105"/>
        <label>1</label>
    </ligand>
</feature>
<feature type="binding site" evidence="1">
    <location>
        <position position="169"/>
    </location>
    <ligand>
        <name>Zn(2+)</name>
        <dbReference type="ChEBI" id="CHEBI:29105"/>
        <label>2</label>
    </ligand>
</feature>
<feature type="binding site" evidence="1">
    <location>
        <position position="172"/>
    </location>
    <ligand>
        <name>Zn(2+)</name>
        <dbReference type="ChEBI" id="CHEBI:29105"/>
        <label>2</label>
    </ligand>
</feature>
<feature type="binding site" evidence="1">
    <location>
        <position position="195"/>
    </location>
    <ligand>
        <name>Zn(2+)</name>
        <dbReference type="ChEBI" id="CHEBI:29105"/>
        <label>2</label>
    </ligand>
</feature>
<feature type="binding site" evidence="1">
    <location>
        <position position="198"/>
    </location>
    <ligand>
        <name>Zn(2+)</name>
        <dbReference type="ChEBI" id="CHEBI:29105"/>
        <label>2</label>
    </ligand>
</feature>
<feature type="binding site" evidence="1">
    <location>
        <position position="209"/>
    </location>
    <ligand>
        <name>Zn(2+)</name>
        <dbReference type="ChEBI" id="CHEBI:29105"/>
        <label>1</label>
    </ligand>
</feature>
<feature type="binding site" evidence="1">
    <location>
        <position position="212"/>
    </location>
    <ligand>
        <name>Zn(2+)</name>
        <dbReference type="ChEBI" id="CHEBI:29105"/>
        <label>1</label>
    </ligand>
</feature>
<feature type="sequence conflict" description="In Ref. 2; AAB09431." evidence="2" ref="2">
    <original>Y</original>
    <variation>L</variation>
    <location>
        <position position="25"/>
    </location>
</feature>
<reference key="1">
    <citation type="submission" date="2005-09" db="EMBL/GenBank/DDBJ databases">
        <authorList>
            <person name="Glass J.I."/>
            <person name="Lartigue C."/>
            <person name="Pfannkoch C."/>
            <person name="Baden-Tillson H."/>
            <person name="Smith H.O."/>
            <person name="Venter J.C."/>
            <person name="Roske K."/>
            <person name="Wise K.S."/>
            <person name="Calcutt M.J."/>
            <person name="Nelson W.C."/>
            <person name="Nierman W.C."/>
        </authorList>
    </citation>
    <scope>NUCLEOTIDE SEQUENCE [LARGE SCALE GENOMIC DNA]</scope>
    <source>
        <strain>California kid / ATCC 27343 / NCTC 10154</strain>
    </source>
</reference>
<reference key="2">
    <citation type="journal article" date="1997" name="Int. J. Syst. Bacteriol.">
        <title>Phylogenetic analysis of mycoplasmas based on Hsp70 sequences: cloning of the dnaK (hsp70) gene region of Mycoplasma capricolum.</title>
        <authorList>
            <person name="Falah M."/>
            <person name="Gupta R.S."/>
        </authorList>
    </citation>
    <scope>NUCLEOTIDE SEQUENCE [GENOMIC DNA] OF 1-25</scope>
</reference>
<name>DNAJ_MYCCT</name>
<protein>
    <recommendedName>
        <fullName evidence="1">Chaperone protein DnaJ</fullName>
    </recommendedName>
</protein>
<organism>
    <name type="scientific">Mycoplasma capricolum subsp. capricolum (strain California kid / ATCC 27343 / NCTC 10154)</name>
    <dbReference type="NCBI Taxonomy" id="340047"/>
    <lineage>
        <taxon>Bacteria</taxon>
        <taxon>Bacillati</taxon>
        <taxon>Mycoplasmatota</taxon>
        <taxon>Mollicutes</taxon>
        <taxon>Mycoplasmataceae</taxon>
        <taxon>Mycoplasma</taxon>
    </lineage>
</organism>
<keyword id="KW-0143">Chaperone</keyword>
<keyword id="KW-0963">Cytoplasm</keyword>
<keyword id="KW-0235">DNA replication</keyword>
<keyword id="KW-0479">Metal-binding</keyword>
<keyword id="KW-0677">Repeat</keyword>
<keyword id="KW-0346">Stress response</keyword>
<keyword id="KW-0862">Zinc</keyword>
<keyword id="KW-0863">Zinc-finger</keyword>
<proteinExistence type="inferred from homology"/>
<sequence>MKKKDYYEVLGVSKTASEQEIRQAYRKLAKQYHPDLNKSPDAHDKMVEINEAADVLLDKDKRKQYDQFGHRAFDNSSGFSSNFTDFEDLFSNMGSSGFSSFTNIFSDFFGSNKSDYQRSTKGQSVSIDIYLTFKELLFGVDKIIELDLLTNCSACFGSGAESNSDINICNNCHGTGEVLVQKNMGFFQFQQSAKCNVCNGAGKIIKNKCKNCKGKGKYLERKKIEVNIPKGIRPNQQIKLSQKGHASTNNGVNGDLIIDIYLKESKVFEIINNNDILMTYNISYLDSILGNEIIIKTLDGDIKYKLPKSINSNEAIIINNKGLYKSINKDKRGDLIIKVNIVVPKNLTKKEKELIEQIYEQTSFNPENNINQ</sequence>
<evidence type="ECO:0000255" key="1">
    <source>
        <dbReference type="HAMAP-Rule" id="MF_01152"/>
    </source>
</evidence>
<evidence type="ECO:0000305" key="2"/>
<accession>P71500</accession>
<accession>Q2SSA9</accession>